<comment type="function">
    <text evidence="1">Catalyzes the dephosphorylation of undecaprenyl diphosphate (UPP). Confers resistance to bacitracin.</text>
</comment>
<comment type="catalytic activity">
    <reaction evidence="1">
        <text>di-trans,octa-cis-undecaprenyl diphosphate + H2O = di-trans,octa-cis-undecaprenyl phosphate + phosphate + H(+)</text>
        <dbReference type="Rhea" id="RHEA:28094"/>
        <dbReference type="ChEBI" id="CHEBI:15377"/>
        <dbReference type="ChEBI" id="CHEBI:15378"/>
        <dbReference type="ChEBI" id="CHEBI:43474"/>
        <dbReference type="ChEBI" id="CHEBI:58405"/>
        <dbReference type="ChEBI" id="CHEBI:60392"/>
        <dbReference type="EC" id="3.6.1.27"/>
    </reaction>
</comment>
<comment type="subcellular location">
    <subcellularLocation>
        <location evidence="1">Cell inner membrane</location>
        <topology evidence="1">Multi-pass membrane protein</topology>
    </subcellularLocation>
</comment>
<comment type="miscellaneous">
    <text>Bacitracin is thought to be involved in the inhibition of peptidoglycan synthesis by sequestering undecaprenyl diphosphate, thereby reducing the pool of lipid carrier available.</text>
</comment>
<comment type="similarity">
    <text evidence="1">Belongs to the UppP family.</text>
</comment>
<reference key="1">
    <citation type="journal article" date="2007" name="Environ. Microbiol.">
        <title>Whole-genome analysis of the ammonia-oxidizing bacterium, Nitrosomonas eutropha C91: implications for niche adaptation.</title>
        <authorList>
            <person name="Stein L.Y."/>
            <person name="Arp D.J."/>
            <person name="Berube P.M."/>
            <person name="Chain P.S."/>
            <person name="Hauser L."/>
            <person name="Jetten M.S."/>
            <person name="Klotz M.G."/>
            <person name="Larimer F.W."/>
            <person name="Norton J.M."/>
            <person name="Op den Camp H.J.M."/>
            <person name="Shin M."/>
            <person name="Wei X."/>
        </authorList>
    </citation>
    <scope>NUCLEOTIDE SEQUENCE [LARGE SCALE GENOMIC DNA]</scope>
    <source>
        <strain>DSM 101675 / C91 / Nm57</strain>
    </source>
</reference>
<keyword id="KW-0046">Antibiotic resistance</keyword>
<keyword id="KW-0997">Cell inner membrane</keyword>
<keyword id="KW-1003">Cell membrane</keyword>
<keyword id="KW-0133">Cell shape</keyword>
<keyword id="KW-0961">Cell wall biogenesis/degradation</keyword>
<keyword id="KW-0378">Hydrolase</keyword>
<keyword id="KW-0472">Membrane</keyword>
<keyword id="KW-0573">Peptidoglycan synthesis</keyword>
<keyword id="KW-0812">Transmembrane</keyword>
<keyword id="KW-1133">Transmembrane helix</keyword>
<gene>
    <name evidence="1" type="primary">uppP</name>
    <name type="ordered locus">Neut_0195</name>
</gene>
<sequence length="273" mass="30315">MDWLILIKAFLLGIVEGLTEFLPISSTGHLILAGDLLDFNDDKAQVFTVAIQLGAILSVCWEYRARLINVARGWGTRRANRFVLNLCVAFLPAAILGLLFIKTIKYYLFHPLPVAIALVTGGVLILWAERREHRIEVENVDDMNWKHALKIGCAQCLALIPGTSRSGATIIGGLLSGLSRKAAAEFSFFLAIPIMFAATFYDVYKHREFLHSDDLGMFVVGSIAAFISALIAIRGFIRYVSHHDFTLFAWYRIGFGLIVLLTAHFGLINWSAG</sequence>
<name>UPPP_NITEC</name>
<feature type="chain" id="PRO_0000290737" description="Undecaprenyl-diphosphatase">
    <location>
        <begin position="1"/>
        <end position="273"/>
    </location>
</feature>
<feature type="transmembrane region" description="Helical" evidence="1">
    <location>
        <begin position="4"/>
        <end position="24"/>
    </location>
</feature>
<feature type="transmembrane region" description="Helical" evidence="1">
    <location>
        <begin position="43"/>
        <end position="63"/>
    </location>
</feature>
<feature type="transmembrane region" description="Helical" evidence="1">
    <location>
        <begin position="82"/>
        <end position="102"/>
    </location>
</feature>
<feature type="transmembrane region" description="Helical" evidence="1">
    <location>
        <begin position="108"/>
        <end position="128"/>
    </location>
</feature>
<feature type="transmembrane region" description="Helical" evidence="1">
    <location>
        <begin position="183"/>
        <end position="203"/>
    </location>
</feature>
<feature type="transmembrane region" description="Helical" evidence="1">
    <location>
        <begin position="217"/>
        <end position="237"/>
    </location>
</feature>
<feature type="transmembrane region" description="Helical" evidence="1">
    <location>
        <begin position="253"/>
        <end position="273"/>
    </location>
</feature>
<evidence type="ECO:0000255" key="1">
    <source>
        <dbReference type="HAMAP-Rule" id="MF_01006"/>
    </source>
</evidence>
<organism>
    <name type="scientific">Nitrosomonas eutropha (strain DSM 101675 / C91 / Nm57)</name>
    <dbReference type="NCBI Taxonomy" id="335283"/>
    <lineage>
        <taxon>Bacteria</taxon>
        <taxon>Pseudomonadati</taxon>
        <taxon>Pseudomonadota</taxon>
        <taxon>Betaproteobacteria</taxon>
        <taxon>Nitrosomonadales</taxon>
        <taxon>Nitrosomonadaceae</taxon>
        <taxon>Nitrosomonas</taxon>
    </lineage>
</organism>
<accession>Q0AJJ0</accession>
<proteinExistence type="inferred from homology"/>
<protein>
    <recommendedName>
        <fullName evidence="1">Undecaprenyl-diphosphatase</fullName>
        <ecNumber evidence="1">3.6.1.27</ecNumber>
    </recommendedName>
    <alternativeName>
        <fullName evidence="1">Bacitracin resistance protein</fullName>
    </alternativeName>
    <alternativeName>
        <fullName evidence="1">Undecaprenyl pyrophosphate phosphatase</fullName>
    </alternativeName>
</protein>
<dbReference type="EC" id="3.6.1.27" evidence="1"/>
<dbReference type="EMBL" id="CP000450">
    <property type="protein sequence ID" value="ABI58481.1"/>
    <property type="molecule type" value="Genomic_DNA"/>
</dbReference>
<dbReference type="RefSeq" id="WP_011633326.1">
    <property type="nucleotide sequence ID" value="NC_008344.1"/>
</dbReference>
<dbReference type="SMR" id="Q0AJJ0"/>
<dbReference type="STRING" id="335283.Neut_0195"/>
<dbReference type="KEGG" id="net:Neut_0195"/>
<dbReference type="eggNOG" id="COG1968">
    <property type="taxonomic scope" value="Bacteria"/>
</dbReference>
<dbReference type="HOGENOM" id="CLU_060296_2_0_4"/>
<dbReference type="OrthoDB" id="9808289at2"/>
<dbReference type="Proteomes" id="UP000001966">
    <property type="component" value="Chromosome"/>
</dbReference>
<dbReference type="GO" id="GO:0005886">
    <property type="term" value="C:plasma membrane"/>
    <property type="evidence" value="ECO:0007669"/>
    <property type="project" value="UniProtKB-SubCell"/>
</dbReference>
<dbReference type="GO" id="GO:0050380">
    <property type="term" value="F:undecaprenyl-diphosphatase activity"/>
    <property type="evidence" value="ECO:0007669"/>
    <property type="project" value="UniProtKB-UniRule"/>
</dbReference>
<dbReference type="GO" id="GO:0071555">
    <property type="term" value="P:cell wall organization"/>
    <property type="evidence" value="ECO:0007669"/>
    <property type="project" value="UniProtKB-KW"/>
</dbReference>
<dbReference type="GO" id="GO:0009252">
    <property type="term" value="P:peptidoglycan biosynthetic process"/>
    <property type="evidence" value="ECO:0007669"/>
    <property type="project" value="UniProtKB-KW"/>
</dbReference>
<dbReference type="GO" id="GO:0008360">
    <property type="term" value="P:regulation of cell shape"/>
    <property type="evidence" value="ECO:0007669"/>
    <property type="project" value="UniProtKB-KW"/>
</dbReference>
<dbReference type="GO" id="GO:0046677">
    <property type="term" value="P:response to antibiotic"/>
    <property type="evidence" value="ECO:0007669"/>
    <property type="project" value="UniProtKB-UniRule"/>
</dbReference>
<dbReference type="HAMAP" id="MF_01006">
    <property type="entry name" value="Undec_diphosphatase"/>
    <property type="match status" value="1"/>
</dbReference>
<dbReference type="InterPro" id="IPR003824">
    <property type="entry name" value="UppP"/>
</dbReference>
<dbReference type="NCBIfam" id="NF001389">
    <property type="entry name" value="PRK00281.1-2"/>
    <property type="match status" value="1"/>
</dbReference>
<dbReference type="NCBIfam" id="NF001390">
    <property type="entry name" value="PRK00281.1-4"/>
    <property type="match status" value="1"/>
</dbReference>
<dbReference type="NCBIfam" id="TIGR00753">
    <property type="entry name" value="undec_PP_bacA"/>
    <property type="match status" value="1"/>
</dbReference>
<dbReference type="PANTHER" id="PTHR30622">
    <property type="entry name" value="UNDECAPRENYL-DIPHOSPHATASE"/>
    <property type="match status" value="1"/>
</dbReference>
<dbReference type="PANTHER" id="PTHR30622:SF3">
    <property type="entry name" value="UNDECAPRENYL-DIPHOSPHATASE"/>
    <property type="match status" value="1"/>
</dbReference>
<dbReference type="Pfam" id="PF02673">
    <property type="entry name" value="BacA"/>
    <property type="match status" value="1"/>
</dbReference>